<dbReference type="EC" id="6.1.1.5" evidence="1"/>
<dbReference type="EMBL" id="CP000361">
    <property type="protein sequence ID" value="ABV66786.1"/>
    <property type="molecule type" value="Genomic_DNA"/>
</dbReference>
<dbReference type="RefSeq" id="WP_012012317.1">
    <property type="nucleotide sequence ID" value="NC_009850.1"/>
</dbReference>
<dbReference type="SMR" id="A8ES62"/>
<dbReference type="STRING" id="367737.Abu_0519"/>
<dbReference type="GeneID" id="24305643"/>
<dbReference type="KEGG" id="abu:Abu_0519"/>
<dbReference type="eggNOG" id="COG0060">
    <property type="taxonomic scope" value="Bacteria"/>
</dbReference>
<dbReference type="HOGENOM" id="CLU_001493_7_0_7"/>
<dbReference type="Proteomes" id="UP000001136">
    <property type="component" value="Chromosome"/>
</dbReference>
<dbReference type="GO" id="GO:0005829">
    <property type="term" value="C:cytosol"/>
    <property type="evidence" value="ECO:0007669"/>
    <property type="project" value="TreeGrafter"/>
</dbReference>
<dbReference type="GO" id="GO:0002161">
    <property type="term" value="F:aminoacyl-tRNA deacylase activity"/>
    <property type="evidence" value="ECO:0007669"/>
    <property type="project" value="InterPro"/>
</dbReference>
<dbReference type="GO" id="GO:0005524">
    <property type="term" value="F:ATP binding"/>
    <property type="evidence" value="ECO:0007669"/>
    <property type="project" value="UniProtKB-UniRule"/>
</dbReference>
<dbReference type="GO" id="GO:0004822">
    <property type="term" value="F:isoleucine-tRNA ligase activity"/>
    <property type="evidence" value="ECO:0007669"/>
    <property type="project" value="UniProtKB-UniRule"/>
</dbReference>
<dbReference type="GO" id="GO:0000049">
    <property type="term" value="F:tRNA binding"/>
    <property type="evidence" value="ECO:0007669"/>
    <property type="project" value="InterPro"/>
</dbReference>
<dbReference type="GO" id="GO:0008270">
    <property type="term" value="F:zinc ion binding"/>
    <property type="evidence" value="ECO:0007669"/>
    <property type="project" value="UniProtKB-UniRule"/>
</dbReference>
<dbReference type="GO" id="GO:0006428">
    <property type="term" value="P:isoleucyl-tRNA aminoacylation"/>
    <property type="evidence" value="ECO:0007669"/>
    <property type="project" value="UniProtKB-UniRule"/>
</dbReference>
<dbReference type="CDD" id="cd07960">
    <property type="entry name" value="Anticodon_Ia_Ile_BEm"/>
    <property type="match status" value="1"/>
</dbReference>
<dbReference type="CDD" id="cd00818">
    <property type="entry name" value="IleRS_core"/>
    <property type="match status" value="1"/>
</dbReference>
<dbReference type="FunFam" id="3.40.50.620:FF:000042">
    <property type="entry name" value="Isoleucine--tRNA ligase"/>
    <property type="match status" value="1"/>
</dbReference>
<dbReference type="Gene3D" id="1.10.730.20">
    <property type="match status" value="1"/>
</dbReference>
<dbReference type="Gene3D" id="3.40.50.620">
    <property type="entry name" value="HUPs"/>
    <property type="match status" value="2"/>
</dbReference>
<dbReference type="Gene3D" id="3.90.740.10">
    <property type="entry name" value="Valyl/Leucyl/Isoleucyl-tRNA synthetase, editing domain"/>
    <property type="match status" value="1"/>
</dbReference>
<dbReference type="HAMAP" id="MF_02002">
    <property type="entry name" value="Ile_tRNA_synth_type1"/>
    <property type="match status" value="1"/>
</dbReference>
<dbReference type="InterPro" id="IPR001412">
    <property type="entry name" value="aa-tRNA-synth_I_CS"/>
</dbReference>
<dbReference type="InterPro" id="IPR002300">
    <property type="entry name" value="aa-tRNA-synth_Ia"/>
</dbReference>
<dbReference type="InterPro" id="IPR033708">
    <property type="entry name" value="Anticodon_Ile_BEm"/>
</dbReference>
<dbReference type="InterPro" id="IPR002301">
    <property type="entry name" value="Ile-tRNA-ligase"/>
</dbReference>
<dbReference type="InterPro" id="IPR023585">
    <property type="entry name" value="Ile-tRNA-ligase_type1"/>
</dbReference>
<dbReference type="InterPro" id="IPR050081">
    <property type="entry name" value="Ile-tRNA_ligase"/>
</dbReference>
<dbReference type="InterPro" id="IPR013155">
    <property type="entry name" value="M/V/L/I-tRNA-synth_anticd-bd"/>
</dbReference>
<dbReference type="InterPro" id="IPR014729">
    <property type="entry name" value="Rossmann-like_a/b/a_fold"/>
</dbReference>
<dbReference type="InterPro" id="IPR009080">
    <property type="entry name" value="tRNAsynth_Ia_anticodon-bd"/>
</dbReference>
<dbReference type="InterPro" id="IPR009008">
    <property type="entry name" value="Val/Leu/Ile-tRNA-synth_edit"/>
</dbReference>
<dbReference type="NCBIfam" id="TIGR00392">
    <property type="entry name" value="ileS"/>
    <property type="match status" value="1"/>
</dbReference>
<dbReference type="PANTHER" id="PTHR42765:SF1">
    <property type="entry name" value="ISOLEUCINE--TRNA LIGASE, MITOCHONDRIAL"/>
    <property type="match status" value="1"/>
</dbReference>
<dbReference type="PANTHER" id="PTHR42765">
    <property type="entry name" value="SOLEUCYL-TRNA SYNTHETASE"/>
    <property type="match status" value="1"/>
</dbReference>
<dbReference type="Pfam" id="PF08264">
    <property type="entry name" value="Anticodon_1"/>
    <property type="match status" value="1"/>
</dbReference>
<dbReference type="Pfam" id="PF00133">
    <property type="entry name" value="tRNA-synt_1"/>
    <property type="match status" value="1"/>
</dbReference>
<dbReference type="PRINTS" id="PR00984">
    <property type="entry name" value="TRNASYNTHILE"/>
</dbReference>
<dbReference type="SUPFAM" id="SSF47323">
    <property type="entry name" value="Anticodon-binding domain of a subclass of class I aminoacyl-tRNA synthetases"/>
    <property type="match status" value="1"/>
</dbReference>
<dbReference type="SUPFAM" id="SSF52374">
    <property type="entry name" value="Nucleotidylyl transferase"/>
    <property type="match status" value="1"/>
</dbReference>
<dbReference type="SUPFAM" id="SSF50677">
    <property type="entry name" value="ValRS/IleRS/LeuRS editing domain"/>
    <property type="match status" value="1"/>
</dbReference>
<dbReference type="PROSITE" id="PS00178">
    <property type="entry name" value="AA_TRNA_LIGASE_I"/>
    <property type="match status" value="1"/>
</dbReference>
<evidence type="ECO:0000255" key="1">
    <source>
        <dbReference type="HAMAP-Rule" id="MF_02002"/>
    </source>
</evidence>
<reference key="1">
    <citation type="journal article" date="2007" name="PLoS ONE">
        <title>The complete genome sequence and analysis of the Epsilonproteobacterium Arcobacter butzleri.</title>
        <authorList>
            <person name="Miller W.G."/>
            <person name="Parker C.T."/>
            <person name="Rubenfield M."/>
            <person name="Mendz G.L."/>
            <person name="Woesten M.M.S.M."/>
            <person name="Ussery D.W."/>
            <person name="Stolz J.F."/>
            <person name="Binnewies T.T."/>
            <person name="Hallin P.F."/>
            <person name="Wang G."/>
            <person name="Malek J.A."/>
            <person name="Rogosin A."/>
            <person name="Stanker L.H."/>
            <person name="Mandrell R.E."/>
        </authorList>
    </citation>
    <scope>NUCLEOTIDE SEQUENCE [LARGE SCALE GENOMIC DNA]</scope>
    <source>
        <strain>RM4018</strain>
    </source>
</reference>
<gene>
    <name evidence="1" type="primary">ileS</name>
    <name type="ordered locus">Abu_0519</name>
</gene>
<name>SYI_ALIB4</name>
<feature type="chain" id="PRO_1000070884" description="Isoleucine--tRNA ligase">
    <location>
        <begin position="1"/>
        <end position="919"/>
    </location>
</feature>
<feature type="short sequence motif" description="'HIGH' region">
    <location>
        <begin position="57"/>
        <end position="67"/>
    </location>
</feature>
<feature type="short sequence motif" description="'KMSKS' region">
    <location>
        <begin position="610"/>
        <end position="614"/>
    </location>
</feature>
<feature type="binding site" evidence="1">
    <location>
        <position position="569"/>
    </location>
    <ligand>
        <name>L-isoleucyl-5'-AMP</name>
        <dbReference type="ChEBI" id="CHEBI:178002"/>
    </ligand>
</feature>
<feature type="binding site" evidence="1">
    <location>
        <position position="613"/>
    </location>
    <ligand>
        <name>ATP</name>
        <dbReference type="ChEBI" id="CHEBI:30616"/>
    </ligand>
</feature>
<feature type="binding site" evidence="1">
    <location>
        <position position="896"/>
    </location>
    <ligand>
        <name>Zn(2+)</name>
        <dbReference type="ChEBI" id="CHEBI:29105"/>
    </ligand>
</feature>
<feature type="binding site" evidence="1">
    <location>
        <position position="899"/>
    </location>
    <ligand>
        <name>Zn(2+)</name>
        <dbReference type="ChEBI" id="CHEBI:29105"/>
    </ligand>
</feature>
<feature type="binding site" evidence="1">
    <location>
        <position position="911"/>
    </location>
    <ligand>
        <name>Zn(2+)</name>
        <dbReference type="ChEBI" id="CHEBI:29105"/>
    </ligand>
</feature>
<feature type="binding site" evidence="1">
    <location>
        <position position="914"/>
    </location>
    <ligand>
        <name>Zn(2+)</name>
        <dbReference type="ChEBI" id="CHEBI:29105"/>
    </ligand>
</feature>
<comment type="function">
    <text evidence="1">Catalyzes the attachment of isoleucine to tRNA(Ile). As IleRS can inadvertently accommodate and process structurally similar amino acids such as valine, to avoid such errors it has two additional distinct tRNA(Ile)-dependent editing activities. One activity is designated as 'pretransfer' editing and involves the hydrolysis of activated Val-AMP. The other activity is designated 'posttransfer' editing and involves deacylation of mischarged Val-tRNA(Ile).</text>
</comment>
<comment type="catalytic activity">
    <reaction evidence="1">
        <text>tRNA(Ile) + L-isoleucine + ATP = L-isoleucyl-tRNA(Ile) + AMP + diphosphate</text>
        <dbReference type="Rhea" id="RHEA:11060"/>
        <dbReference type="Rhea" id="RHEA-COMP:9666"/>
        <dbReference type="Rhea" id="RHEA-COMP:9695"/>
        <dbReference type="ChEBI" id="CHEBI:30616"/>
        <dbReference type="ChEBI" id="CHEBI:33019"/>
        <dbReference type="ChEBI" id="CHEBI:58045"/>
        <dbReference type="ChEBI" id="CHEBI:78442"/>
        <dbReference type="ChEBI" id="CHEBI:78528"/>
        <dbReference type="ChEBI" id="CHEBI:456215"/>
        <dbReference type="EC" id="6.1.1.5"/>
    </reaction>
</comment>
<comment type="cofactor">
    <cofactor evidence="1">
        <name>Zn(2+)</name>
        <dbReference type="ChEBI" id="CHEBI:29105"/>
    </cofactor>
    <text evidence="1">Binds 1 zinc ion per subunit.</text>
</comment>
<comment type="subunit">
    <text evidence="1">Monomer.</text>
</comment>
<comment type="subcellular location">
    <subcellularLocation>
        <location evidence="1">Cytoplasm</location>
    </subcellularLocation>
</comment>
<comment type="domain">
    <text evidence="1">IleRS has two distinct active sites: one for aminoacylation and one for editing. The misactivated valine is translocated from the active site to the editing site, which sterically excludes the correctly activated isoleucine. The single editing site contains two valyl binding pockets, one specific for each substrate (Val-AMP or Val-tRNA(Ile)).</text>
</comment>
<comment type="similarity">
    <text evidence="1">Belongs to the class-I aminoacyl-tRNA synthetase family. IleS type 1 subfamily.</text>
</comment>
<sequence>MDYKESLLLPKTDFPMRGNLPQNEPVKYKQWDEKKVYEKMKKNRVGCPSFTLHDGPPYANGNIHIGHALNKILKDIINKFHYFEGKSIRYVPGWDCHGLPIEQKVEEKIGSEKKKELPKSKLRQLCRDHATKFVEIQKDEFKKLGVIADWENPYLTMDFKFEANIYRELCAIAKQGLLIQRSKPVYWSWAAQTALAEAEVEYEDKTSPSIYVAFEMSNESKAIHGLENKKAAFVIWTTTPWTLPANTGISLHPVEMYVLTSDGYIVAKALYSKLKEEAVINGEIVTEFEPFMFESNIAINPLNGRTSKIVLGDHVMMDSGTGAVHTAPGHGEDDYKVGLRYNLDVIMPVDAYGKYDETIVREKLFKDTNKYLGLNVFKANELILEELGSALLKRVDIRHSYPHCWRTHTPIIFRATKQWFISIDDKYGNKNNTLRENALEVVENLKFYPEWGRNRLKAMLEGRPDWCISRQRDWGVPIAFFRNKKTDEIIFDEKVLNYTAMIFEQKGCDAWYDLEIKELLYPGSGLNPDDLEKTLDILDVWFDSGSTQNAVLRSRNYDAGTFPADMYLEGSDQHRGWFQSSLLTTLASSEIAPYKSILTHGFTVDEKGEKMSKSKGNVVAPDKVIKEYGSEILRLWVAMSDYQSDLKISDNILKQNGELYRKIRNTARFLLANIDDLEEIIDVSKMGPLDKWILNKAKKVFDEIEAAFNVYEFSKGLNKLNNFLVVDLSGIYLDVCKDRLYCDDKKDIHRLASQSAMALIAKKLISTLACILTYTMDELLEFAPAFIKDGCEDIFDFKKVELPVVESSLDESILLSAKEKFSEIKDALSKEKVIKSTLELMLYTNSEDILALDEVEASDWFLVSQVSKDKQNSDILGSFQIDGKDFEVYKATAHKCPRCWKFTANAEESLCKRCEEVIK</sequence>
<proteinExistence type="inferred from homology"/>
<protein>
    <recommendedName>
        <fullName evidence="1">Isoleucine--tRNA ligase</fullName>
        <ecNumber evidence="1">6.1.1.5</ecNumber>
    </recommendedName>
    <alternativeName>
        <fullName evidence="1">Isoleucyl-tRNA synthetase</fullName>
        <shortName evidence="1">IleRS</shortName>
    </alternativeName>
</protein>
<accession>A8ES62</accession>
<keyword id="KW-0030">Aminoacyl-tRNA synthetase</keyword>
<keyword id="KW-0067">ATP-binding</keyword>
<keyword id="KW-0963">Cytoplasm</keyword>
<keyword id="KW-0436">Ligase</keyword>
<keyword id="KW-0479">Metal-binding</keyword>
<keyword id="KW-0547">Nucleotide-binding</keyword>
<keyword id="KW-0648">Protein biosynthesis</keyword>
<keyword id="KW-1185">Reference proteome</keyword>
<keyword id="KW-0862">Zinc</keyword>
<organism>
    <name type="scientific">Aliarcobacter butzleri (strain RM4018)</name>
    <name type="common">Arcobacter butzleri</name>
    <dbReference type="NCBI Taxonomy" id="367737"/>
    <lineage>
        <taxon>Bacteria</taxon>
        <taxon>Pseudomonadati</taxon>
        <taxon>Campylobacterota</taxon>
        <taxon>Epsilonproteobacteria</taxon>
        <taxon>Campylobacterales</taxon>
        <taxon>Arcobacteraceae</taxon>
        <taxon>Aliarcobacter</taxon>
    </lineage>
</organism>